<organism>
    <name type="scientific">Ixodes scapularis</name>
    <name type="common">Black-legged tick</name>
    <name type="synonym">Deer tick</name>
    <dbReference type="NCBI Taxonomy" id="6945"/>
    <lineage>
        <taxon>Eukaryota</taxon>
        <taxon>Metazoa</taxon>
        <taxon>Ecdysozoa</taxon>
        <taxon>Arthropoda</taxon>
        <taxon>Chelicerata</taxon>
        <taxon>Arachnida</taxon>
        <taxon>Acari</taxon>
        <taxon>Parasitiformes</taxon>
        <taxon>Ixodida</taxon>
        <taxon>Ixodoidea</taxon>
        <taxon>Ixodidae</taxon>
        <taxon>Ixodinae</taxon>
        <taxon>Ixodes</taxon>
    </lineage>
</organism>
<comment type="subcellular location">
    <subcellularLocation>
        <location evidence="2">Membrane</location>
        <topology evidence="2">Single-pass membrane protein</topology>
    </subcellularLocation>
</comment>
<comment type="similarity">
    <text evidence="2">Belongs to the SMIM7 family.</text>
</comment>
<sequence length="74" mass="8386">MISDIILFGTLMVNAGAVLNFKLQKTPSESFVEKTEPTAGDKIRDFLGAVRYFRAFIGLWNIFIMFLMLVFFGS</sequence>
<keyword id="KW-0472">Membrane</keyword>
<keyword id="KW-1185">Reference proteome</keyword>
<keyword id="KW-0812">Transmembrane</keyword>
<keyword id="KW-1133">Transmembrane helix</keyword>
<evidence type="ECO:0000255" key="1"/>
<evidence type="ECO:0000305" key="2"/>
<protein>
    <recommendedName>
        <fullName>Protein SMIM7 homolog</fullName>
    </recommendedName>
</protein>
<accession>B7QIN3</accession>
<gene>
    <name type="ORF">ISCW013552</name>
</gene>
<feature type="chain" id="PRO_0000388664" description="Protein SMIM7 homolog">
    <location>
        <begin position="1"/>
        <end position="74"/>
    </location>
</feature>
<feature type="transmembrane region" description="Helical" evidence="1">
    <location>
        <begin position="53"/>
        <end position="73"/>
    </location>
</feature>
<proteinExistence type="inferred from homology"/>
<name>SMIM7_IXOSC</name>
<dbReference type="EMBL" id="DS947379">
    <property type="protein sequence ID" value="EEC18705.1"/>
    <property type="molecule type" value="Genomic_DNA"/>
</dbReference>
<dbReference type="RefSeq" id="XP_002415040.1">
    <property type="nucleotide sequence ID" value="XM_002414995.1"/>
</dbReference>
<dbReference type="STRING" id="6945.B7QIN3"/>
<dbReference type="PaxDb" id="6945-B7QIN3"/>
<dbReference type="EnsemblMetazoa" id="ISCW013552-RA">
    <property type="protein sequence ID" value="ISCW013552-PA"/>
    <property type="gene ID" value="ISCW013552"/>
</dbReference>
<dbReference type="KEGG" id="isc:8041823"/>
<dbReference type="VEuPathDB" id="VectorBase:ISCI013552"/>
<dbReference type="VEuPathDB" id="VectorBase:ISCP_011663"/>
<dbReference type="VEuPathDB" id="VectorBase:ISCW013552"/>
<dbReference type="HOGENOM" id="CLU_181165_0_0_1"/>
<dbReference type="InParanoid" id="B7QIN3"/>
<dbReference type="OrthoDB" id="10047572at2759"/>
<dbReference type="Proteomes" id="UP000001555">
    <property type="component" value="Unassembled WGS sequence"/>
</dbReference>
<dbReference type="GO" id="GO:0016020">
    <property type="term" value="C:membrane"/>
    <property type="evidence" value="ECO:0007669"/>
    <property type="project" value="UniProtKB-SubCell"/>
</dbReference>
<dbReference type="InterPro" id="IPR037659">
    <property type="entry name" value="SMIM7"/>
</dbReference>
<dbReference type="PANTHER" id="PTHR28622">
    <property type="entry name" value="SMALL INTEGRAL MEMBRANE PROTEIN 7"/>
    <property type="match status" value="1"/>
</dbReference>
<dbReference type="PANTHER" id="PTHR28622:SF1">
    <property type="entry name" value="SMALL INTEGRAL MEMBRANE PROTEIN 7"/>
    <property type="match status" value="1"/>
</dbReference>
<reference key="1">
    <citation type="submission" date="2008-03" db="EMBL/GenBank/DDBJ databases">
        <title>Annotation of Ixodes scapularis.</title>
        <authorList>
            <consortium name="Ixodes scapularis Genome Project Consortium"/>
            <person name="Caler E."/>
            <person name="Hannick L.I."/>
            <person name="Bidwell S."/>
            <person name="Joardar V."/>
            <person name="Thiagarajan M."/>
            <person name="Amedeo P."/>
            <person name="Galinsky K.J."/>
            <person name="Schobel S."/>
            <person name="Inman J."/>
            <person name="Hostetler J."/>
            <person name="Miller J."/>
            <person name="Hammond M."/>
            <person name="Megy K."/>
            <person name="Lawson D."/>
            <person name="Kodira C."/>
            <person name="Sutton G."/>
            <person name="Meyer J."/>
            <person name="Hill C.A."/>
            <person name="Birren B."/>
            <person name="Nene V."/>
            <person name="Collins F."/>
            <person name="Alarcon-Chaidez F."/>
            <person name="Wikel S."/>
            <person name="Strausberg R."/>
        </authorList>
    </citation>
    <scope>NUCLEOTIDE SEQUENCE [LARGE SCALE GENOMIC DNA]</scope>
    <source>
        <strain>Wikel</strain>
    </source>
</reference>